<comment type="function">
    <text evidence="1">Molecular chaperone.</text>
</comment>
<comment type="catalytic activity">
    <reaction>
        <text>prostaglandin H2 = prostaglandin E2</text>
        <dbReference type="Rhea" id="RHEA:12893"/>
        <dbReference type="ChEBI" id="CHEBI:57405"/>
        <dbReference type="ChEBI" id="CHEBI:606564"/>
        <dbReference type="EC" id="5.3.99.3"/>
    </reaction>
</comment>
<comment type="pathway">
    <text>Lipid metabolism; prostaglandin biosynthesis.</text>
</comment>
<comment type="subunit">
    <text evidence="1 5">Binds to telomerase (By similarity). Binds to the progesterone receptor (PubMed:8114727).</text>
</comment>
<comment type="subcellular location">
    <subcellularLocation>
        <location evidence="2">Cytoplasm</location>
    </subcellularLocation>
</comment>
<comment type="similarity">
    <text evidence="6">Belongs to the p23/wos2 family.</text>
</comment>
<name>TEBP_CHICK</name>
<reference key="1">
    <citation type="journal article" date="1994" name="Mol. Cell. Biol.">
        <title>Characterization of a novel 23-kilodalton protein of unactive progesterone receptor complexes.</title>
        <authorList>
            <person name="Johnson J.L."/>
            <person name="Beito T.G."/>
            <person name="Krco C.J."/>
            <person name="Toft D.O."/>
        </authorList>
    </citation>
    <scope>NUCLEOTIDE SEQUENCE [MRNA]</scope>
    <scope>PARTIAL PROTEIN SEQUENCE</scope>
    <source>
        <tissue>Brain</tissue>
    </source>
</reference>
<organism>
    <name type="scientific">Gallus gallus</name>
    <name type="common">Chicken</name>
    <dbReference type="NCBI Taxonomy" id="9031"/>
    <lineage>
        <taxon>Eukaryota</taxon>
        <taxon>Metazoa</taxon>
        <taxon>Chordata</taxon>
        <taxon>Craniata</taxon>
        <taxon>Vertebrata</taxon>
        <taxon>Euteleostomi</taxon>
        <taxon>Archelosauria</taxon>
        <taxon>Archosauria</taxon>
        <taxon>Dinosauria</taxon>
        <taxon>Saurischia</taxon>
        <taxon>Theropoda</taxon>
        <taxon>Coelurosauria</taxon>
        <taxon>Aves</taxon>
        <taxon>Neognathae</taxon>
        <taxon>Galloanserae</taxon>
        <taxon>Galliformes</taxon>
        <taxon>Phasianidae</taxon>
        <taxon>Phasianinae</taxon>
        <taxon>Gallus</taxon>
    </lineage>
</organism>
<accession>Q90955</accession>
<proteinExistence type="evidence at protein level"/>
<sequence length="146" mass="16869">VFIEFCVEDSKDVNVNFEKSKLTFSCLGGSDNFKHLNEIDLFNNIDPNESKHKRTDRSILCCLRKGESGQAWPRLTKERAKLNWLSVDFNNWKDWEDDSDEDMSNFDRFSEMMNNMGGDDDVDLPEVDGADDDSPDSDDEKMPDLE</sequence>
<keyword id="KW-0963">Cytoplasm</keyword>
<keyword id="KW-0903">Direct protein sequencing</keyword>
<keyword id="KW-0275">Fatty acid biosynthesis</keyword>
<keyword id="KW-0276">Fatty acid metabolism</keyword>
<keyword id="KW-0413">Isomerase</keyword>
<keyword id="KW-0444">Lipid biosynthesis</keyword>
<keyword id="KW-0443">Lipid metabolism</keyword>
<keyword id="KW-0643">Prostaglandin biosynthesis</keyword>
<keyword id="KW-0644">Prostaglandin metabolism</keyword>
<keyword id="KW-1185">Reference proteome</keyword>
<feature type="chain" id="PRO_0000218954" description="Prostaglandin E synthase 3">
    <location>
        <begin position="1" status="less than"/>
        <end position="146"/>
    </location>
</feature>
<feature type="domain" description="CS" evidence="3">
    <location>
        <begin position="1" status="less than"/>
        <end position="76"/>
    </location>
</feature>
<feature type="region of interest" description="Disordered" evidence="4">
    <location>
        <begin position="110"/>
        <end position="146"/>
    </location>
</feature>
<feature type="compositionally biased region" description="Acidic residues" evidence="4">
    <location>
        <begin position="118"/>
        <end position="139"/>
    </location>
</feature>
<feature type="non-terminal residue">
    <location>
        <position position="1"/>
    </location>
</feature>
<protein>
    <recommendedName>
        <fullName>Prostaglandin E synthase 3</fullName>
        <ecNumber>5.3.99.3</ecNumber>
    </recommendedName>
    <alternativeName>
        <fullName>Cytosolic prostaglandin E2 synthase</fullName>
        <shortName>cPGES</shortName>
    </alternativeName>
    <alternativeName>
        <fullName>Hsp90 co-chaperone</fullName>
    </alternativeName>
    <alternativeName>
        <fullName>Progesterone receptor complex p23</fullName>
    </alternativeName>
    <alternativeName>
        <fullName>Telomerase-binding protein p23</fullName>
    </alternativeName>
</protein>
<gene>
    <name type="primary">PTGES3</name>
    <name type="synonym">TEBP</name>
</gene>
<evidence type="ECO:0000250" key="1">
    <source>
        <dbReference type="UniProtKB" id="Q15185"/>
    </source>
</evidence>
<evidence type="ECO:0000250" key="2">
    <source>
        <dbReference type="UniProtKB" id="Q3ZBF7"/>
    </source>
</evidence>
<evidence type="ECO:0000255" key="3">
    <source>
        <dbReference type="PROSITE-ProRule" id="PRU00547"/>
    </source>
</evidence>
<evidence type="ECO:0000256" key="4">
    <source>
        <dbReference type="SAM" id="MobiDB-lite"/>
    </source>
</evidence>
<evidence type="ECO:0000269" key="5">
    <source>
    </source>
</evidence>
<evidence type="ECO:0000305" key="6"/>
<dbReference type="EC" id="5.3.99.3"/>
<dbReference type="EMBL" id="L24898">
    <property type="protein sequence ID" value="AAA17491.1"/>
    <property type="molecule type" value="mRNA"/>
</dbReference>
<dbReference type="RefSeq" id="NP_001263235.1">
    <property type="nucleotide sequence ID" value="NM_001276306.2"/>
</dbReference>
<dbReference type="SMR" id="Q90955"/>
<dbReference type="FunCoup" id="Q90955">
    <property type="interactions" value="3050"/>
</dbReference>
<dbReference type="STRING" id="9031.ENSGALP00000069892"/>
<dbReference type="GeneID" id="100859133"/>
<dbReference type="KEGG" id="gga:100859133"/>
<dbReference type="CTD" id="10728"/>
<dbReference type="VEuPathDB" id="HostDB:geneid_100859133"/>
<dbReference type="InParanoid" id="Q90955"/>
<dbReference type="OrthoDB" id="1564555at2759"/>
<dbReference type="PhylomeDB" id="Q90955"/>
<dbReference type="TreeFam" id="TF315077"/>
<dbReference type="UniPathway" id="UPA00662"/>
<dbReference type="Proteomes" id="UP000000539">
    <property type="component" value="Unassembled WGS sequence"/>
</dbReference>
<dbReference type="GO" id="GO:0005829">
    <property type="term" value="C:cytosol"/>
    <property type="evidence" value="ECO:0000314"/>
    <property type="project" value="AgBase"/>
</dbReference>
<dbReference type="GO" id="GO:0005634">
    <property type="term" value="C:nucleus"/>
    <property type="evidence" value="ECO:0000318"/>
    <property type="project" value="GO_Central"/>
</dbReference>
<dbReference type="GO" id="GO:0005697">
    <property type="term" value="C:telomerase holoenzyme complex"/>
    <property type="evidence" value="ECO:0000250"/>
    <property type="project" value="AgBase"/>
</dbReference>
<dbReference type="GO" id="GO:0051879">
    <property type="term" value="F:Hsp90 protein binding"/>
    <property type="evidence" value="ECO:0000318"/>
    <property type="project" value="GO_Central"/>
</dbReference>
<dbReference type="GO" id="GO:0033142">
    <property type="term" value="F:nuclear progesterone receptor binding"/>
    <property type="evidence" value="ECO:0000353"/>
    <property type="project" value="AgBase"/>
</dbReference>
<dbReference type="GO" id="GO:0050220">
    <property type="term" value="F:prostaglandin-E synthase activity"/>
    <property type="evidence" value="ECO:0000250"/>
    <property type="project" value="AgBase"/>
</dbReference>
<dbReference type="GO" id="GO:0051087">
    <property type="term" value="F:protein-folding chaperone binding"/>
    <property type="evidence" value="ECO:0000318"/>
    <property type="project" value="GO_Central"/>
</dbReference>
<dbReference type="GO" id="GO:0003720">
    <property type="term" value="F:telomerase activity"/>
    <property type="evidence" value="ECO:0000250"/>
    <property type="project" value="AgBase"/>
</dbReference>
<dbReference type="GO" id="GO:0051082">
    <property type="term" value="F:unfolded protein binding"/>
    <property type="evidence" value="ECO:0000250"/>
    <property type="project" value="AgBase"/>
</dbReference>
<dbReference type="GO" id="GO:0051131">
    <property type="term" value="P:chaperone-mediated protein complex assembly"/>
    <property type="evidence" value="ECO:0000318"/>
    <property type="project" value="GO_Central"/>
</dbReference>
<dbReference type="GO" id="GO:0001516">
    <property type="term" value="P:prostaglandin biosynthetic process"/>
    <property type="evidence" value="ECO:0000250"/>
    <property type="project" value="AgBase"/>
</dbReference>
<dbReference type="GO" id="GO:0006457">
    <property type="term" value="P:protein folding"/>
    <property type="evidence" value="ECO:0000318"/>
    <property type="project" value="GO_Central"/>
</dbReference>
<dbReference type="GO" id="GO:1905323">
    <property type="term" value="P:telomerase holoenzyme complex assembly"/>
    <property type="evidence" value="ECO:0000318"/>
    <property type="project" value="GO_Central"/>
</dbReference>
<dbReference type="GO" id="GO:0007004">
    <property type="term" value="P:telomere maintenance via telomerase"/>
    <property type="evidence" value="ECO:0000318"/>
    <property type="project" value="GO_Central"/>
</dbReference>
<dbReference type="FunFam" id="2.60.40.790:FF:000003">
    <property type="entry name" value="prostaglandin E synthase 3"/>
    <property type="match status" value="1"/>
</dbReference>
<dbReference type="Gene3D" id="2.60.40.790">
    <property type="match status" value="1"/>
</dbReference>
<dbReference type="InterPro" id="IPR007052">
    <property type="entry name" value="CS_dom"/>
</dbReference>
<dbReference type="InterPro" id="IPR008978">
    <property type="entry name" value="HSP20-like_chaperone"/>
</dbReference>
<dbReference type="InterPro" id="IPR045250">
    <property type="entry name" value="p23-like"/>
</dbReference>
<dbReference type="PANTHER" id="PTHR22932:SF3">
    <property type="entry name" value="PROSTAGLANDIN E SYNTHASE 3"/>
    <property type="match status" value="1"/>
</dbReference>
<dbReference type="PANTHER" id="PTHR22932">
    <property type="entry name" value="TELOMERASE-BINDING PROTEIN P23 HSP90 CO-CHAPERONE"/>
    <property type="match status" value="1"/>
</dbReference>
<dbReference type="Pfam" id="PF04969">
    <property type="entry name" value="CS"/>
    <property type="match status" value="1"/>
</dbReference>
<dbReference type="SUPFAM" id="SSF49764">
    <property type="entry name" value="HSP20-like chaperones"/>
    <property type="match status" value="1"/>
</dbReference>
<dbReference type="PROSITE" id="PS51203">
    <property type="entry name" value="CS"/>
    <property type="match status" value="1"/>
</dbReference>